<feature type="chain" id="PRO_0000192041" description="Hydroxymethylpyrimidine/phosphomethylpyrimidine kinase THI20">
    <location>
        <begin position="1"/>
        <end position="551"/>
    </location>
</feature>
<feature type="active site" description="Nucleophile" evidence="1">
    <location>
        <position position="468"/>
    </location>
</feature>
<feature type="active site" description="Proton donor" evidence="1">
    <location>
        <position position="540"/>
    </location>
</feature>
<feature type="binding site" evidence="2">
    <location>
        <position position="64"/>
    </location>
    <ligand>
        <name>4-amino-5-hydroxymethyl-2-methylpyrimidine</name>
        <dbReference type="ChEBI" id="CHEBI:16892"/>
    </ligand>
</feature>
<feature type="site" description="Increases nucleophilicity of active site Cys" evidence="1">
    <location>
        <position position="379"/>
    </location>
</feature>
<feature type="sequence conflict" description="In Ref. 4; AAT92799." evidence="7" ref="4">
    <original>S</original>
    <variation>G</variation>
    <location>
        <position position="323"/>
    </location>
</feature>
<feature type="strand" evidence="9">
    <location>
        <begin position="3"/>
        <end position="7"/>
    </location>
</feature>
<feature type="helix" evidence="9">
    <location>
        <begin position="15"/>
        <end position="18"/>
    </location>
</feature>
<feature type="strand" evidence="9">
    <location>
        <begin position="25"/>
        <end position="31"/>
    </location>
</feature>
<feature type="strand" evidence="9">
    <location>
        <begin position="36"/>
        <end position="38"/>
    </location>
</feature>
<feature type="helix" evidence="9">
    <location>
        <begin position="39"/>
        <end position="49"/>
    </location>
</feature>
<feature type="strand" evidence="9">
    <location>
        <begin position="53"/>
        <end position="64"/>
    </location>
</feature>
<feature type="strand" evidence="9">
    <location>
        <begin position="69"/>
        <end position="74"/>
    </location>
</feature>
<feature type="helix" evidence="9">
    <location>
        <begin position="77"/>
        <end position="90"/>
    </location>
</feature>
<feature type="strand" evidence="9">
    <location>
        <begin position="94"/>
        <end position="98"/>
    </location>
</feature>
<feature type="helix" evidence="9">
    <location>
        <begin position="103"/>
        <end position="116"/>
    </location>
</feature>
<feature type="helix" evidence="9">
    <location>
        <begin position="117"/>
        <end position="119"/>
    </location>
</feature>
<feature type="strand" evidence="9">
    <location>
        <begin position="122"/>
        <end position="125"/>
    </location>
</feature>
<feature type="helix" evidence="9">
    <location>
        <begin position="142"/>
        <end position="149"/>
    </location>
</feature>
<feature type="helix" evidence="9">
    <location>
        <begin position="151"/>
        <end position="153"/>
    </location>
</feature>
<feature type="strand" evidence="9">
    <location>
        <begin position="155"/>
        <end position="157"/>
    </location>
</feature>
<feature type="helix" evidence="9">
    <location>
        <begin position="161"/>
        <end position="168"/>
    </location>
</feature>
<feature type="helix" evidence="9">
    <location>
        <begin position="178"/>
        <end position="191"/>
    </location>
</feature>
<feature type="strand" evidence="9">
    <location>
        <begin position="196"/>
        <end position="200"/>
    </location>
</feature>
<feature type="strand" evidence="9">
    <location>
        <begin position="212"/>
        <end position="219"/>
    </location>
</feature>
<feature type="turn" evidence="9">
    <location>
        <begin position="220"/>
        <end position="223"/>
    </location>
</feature>
<feature type="strand" evidence="9">
    <location>
        <begin position="224"/>
        <end position="231"/>
    </location>
</feature>
<feature type="helix" evidence="9">
    <location>
        <begin position="241"/>
        <end position="254"/>
    </location>
</feature>
<feature type="helix" evidence="9">
    <location>
        <begin position="259"/>
        <end position="276"/>
    </location>
</feature>
<feature type="turn" evidence="9">
    <location>
        <begin position="293"/>
        <end position="296"/>
    </location>
</feature>
<feature type="helix" evidence="9">
    <location>
        <begin position="300"/>
        <end position="305"/>
    </location>
</feature>
<feature type="helix" evidence="9">
    <location>
        <begin position="333"/>
        <end position="339"/>
    </location>
</feature>
<feature type="turn" evidence="9">
    <location>
        <begin position="341"/>
        <end position="343"/>
    </location>
</feature>
<feature type="helix" evidence="9">
    <location>
        <begin position="344"/>
        <end position="351"/>
    </location>
</feature>
<feature type="helix" evidence="9">
    <location>
        <begin position="354"/>
        <end position="360"/>
    </location>
</feature>
<feature type="helix" evidence="9">
    <location>
        <begin position="366"/>
        <end position="393"/>
    </location>
</feature>
<feature type="helix" evidence="9">
    <location>
        <begin position="397"/>
        <end position="423"/>
    </location>
</feature>
<feature type="turn" evidence="9">
    <location>
        <begin position="430"/>
        <end position="434"/>
    </location>
</feature>
<feature type="helix" evidence="9">
    <location>
        <begin position="440"/>
        <end position="455"/>
    </location>
</feature>
<feature type="helix" evidence="9">
    <location>
        <begin position="458"/>
        <end position="477"/>
    </location>
</feature>
<feature type="turn" evidence="9">
    <location>
        <begin position="478"/>
        <end position="481"/>
    </location>
</feature>
<feature type="helix" evidence="9">
    <location>
        <begin position="490"/>
        <end position="497"/>
    </location>
</feature>
<feature type="helix" evidence="9">
    <location>
        <begin position="501"/>
        <end position="518"/>
    </location>
</feature>
<feature type="helix" evidence="9">
    <location>
        <begin position="523"/>
        <end position="525"/>
    </location>
</feature>
<feature type="helix" evidence="9">
    <location>
        <begin position="526"/>
        <end position="548"/>
    </location>
</feature>
<gene>
    <name evidence="6" type="primary">THI20</name>
    <name type="ordered locus">YOL055C</name>
    <name type="ORF">O1239</name>
</gene>
<name>THI20_YEAST</name>
<accession>Q08224</accession>
<accession>D6W212</accession>
<accession>Q05664</accession>
<accession>Q6B2F0</accession>
<proteinExistence type="evidence at protein level"/>
<evidence type="ECO:0000250" key="1">
    <source>
        <dbReference type="UniProtKB" id="P25052"/>
    </source>
</evidence>
<evidence type="ECO:0000250" key="2">
    <source>
        <dbReference type="UniProtKB" id="P55882"/>
    </source>
</evidence>
<evidence type="ECO:0000269" key="3">
    <source>
    </source>
</evidence>
<evidence type="ECO:0000269" key="4">
    <source>
    </source>
</evidence>
<evidence type="ECO:0000269" key="5">
    <source>
    </source>
</evidence>
<evidence type="ECO:0000303" key="6">
    <source>
    </source>
</evidence>
<evidence type="ECO:0000305" key="7"/>
<evidence type="ECO:0007744" key="8">
    <source>
        <dbReference type="PDB" id="3RM5"/>
    </source>
</evidence>
<evidence type="ECO:0007829" key="9">
    <source>
        <dbReference type="PDB" id="3RM5"/>
    </source>
</evidence>
<organism>
    <name type="scientific">Saccharomyces cerevisiae (strain ATCC 204508 / S288c)</name>
    <name type="common">Baker's yeast</name>
    <dbReference type="NCBI Taxonomy" id="559292"/>
    <lineage>
        <taxon>Eukaryota</taxon>
        <taxon>Fungi</taxon>
        <taxon>Dikarya</taxon>
        <taxon>Ascomycota</taxon>
        <taxon>Saccharomycotina</taxon>
        <taxon>Saccharomycetes</taxon>
        <taxon>Saccharomycetales</taxon>
        <taxon>Saccharomycetaceae</taxon>
        <taxon>Saccharomyces</taxon>
    </lineage>
</organism>
<keyword id="KW-0002">3D-structure</keyword>
<keyword id="KW-0067">ATP-binding</keyword>
<keyword id="KW-0378">Hydrolase</keyword>
<keyword id="KW-0418">Kinase</keyword>
<keyword id="KW-0547">Nucleotide-binding</keyword>
<keyword id="KW-1185">Reference proteome</keyword>
<keyword id="KW-0784">Thiamine biosynthesis</keyword>
<keyword id="KW-0808">Transferase</keyword>
<reference key="1">
    <citation type="journal article" date="1996" name="Yeast">
        <title>Analysis of a 26 kb region on the left arm of yeast chromosome XV.</title>
        <authorList>
            <person name="Mannhaupt G."/>
            <person name="Vetter I."/>
            <person name="Schwarzlose C."/>
            <person name="Mitzel S."/>
            <person name="Feldmann H."/>
        </authorList>
    </citation>
    <scope>NUCLEOTIDE SEQUENCE [GENOMIC DNA]</scope>
    <source>
        <strain>ATCC 204508 / S288c</strain>
    </source>
</reference>
<reference key="2">
    <citation type="journal article" date="1997" name="Nature">
        <title>The nucleotide sequence of Saccharomyces cerevisiae chromosome XV.</title>
        <authorList>
            <person name="Dujon B."/>
            <person name="Albermann K."/>
            <person name="Aldea M."/>
            <person name="Alexandraki D."/>
            <person name="Ansorge W."/>
            <person name="Arino J."/>
            <person name="Benes V."/>
            <person name="Bohn C."/>
            <person name="Bolotin-Fukuhara M."/>
            <person name="Bordonne R."/>
            <person name="Boyer J."/>
            <person name="Camasses A."/>
            <person name="Casamayor A."/>
            <person name="Casas C."/>
            <person name="Cheret G."/>
            <person name="Cziepluch C."/>
            <person name="Daignan-Fornier B."/>
            <person name="Dang V.-D."/>
            <person name="de Haan M."/>
            <person name="Delius H."/>
            <person name="Durand P."/>
            <person name="Fairhead C."/>
            <person name="Feldmann H."/>
            <person name="Gaillon L."/>
            <person name="Galisson F."/>
            <person name="Gamo F.-J."/>
            <person name="Gancedo C."/>
            <person name="Goffeau A."/>
            <person name="Goulding S.E."/>
            <person name="Grivell L.A."/>
            <person name="Habbig B."/>
            <person name="Hand N.J."/>
            <person name="Hani J."/>
            <person name="Hattenhorst U."/>
            <person name="Hebling U."/>
            <person name="Hernando Y."/>
            <person name="Herrero E."/>
            <person name="Heumann K."/>
            <person name="Hiesel R."/>
            <person name="Hilger F."/>
            <person name="Hofmann B."/>
            <person name="Hollenberg C.P."/>
            <person name="Hughes B."/>
            <person name="Jauniaux J.-C."/>
            <person name="Kalogeropoulos A."/>
            <person name="Katsoulou C."/>
            <person name="Kordes E."/>
            <person name="Lafuente M.J."/>
            <person name="Landt O."/>
            <person name="Louis E.J."/>
            <person name="Maarse A.C."/>
            <person name="Madania A."/>
            <person name="Mannhaupt G."/>
            <person name="Marck C."/>
            <person name="Martin R.P."/>
            <person name="Mewes H.-W."/>
            <person name="Michaux G."/>
            <person name="Paces V."/>
            <person name="Parle-McDermott A.G."/>
            <person name="Pearson B.M."/>
            <person name="Perrin A."/>
            <person name="Pettersson B."/>
            <person name="Poch O."/>
            <person name="Pohl T.M."/>
            <person name="Poirey R."/>
            <person name="Portetelle D."/>
            <person name="Pujol A."/>
            <person name="Purnelle B."/>
            <person name="Ramezani Rad M."/>
            <person name="Rechmann S."/>
            <person name="Schwager C."/>
            <person name="Schweizer M."/>
            <person name="Sor F."/>
            <person name="Sterky F."/>
            <person name="Tarassov I.A."/>
            <person name="Teodoru C."/>
            <person name="Tettelin H."/>
            <person name="Thierry A."/>
            <person name="Tobiasch E."/>
            <person name="Tzermia M."/>
            <person name="Uhlen M."/>
            <person name="Unseld M."/>
            <person name="Valens M."/>
            <person name="Vandenbol M."/>
            <person name="Vetter I."/>
            <person name="Vlcek C."/>
            <person name="Voet M."/>
            <person name="Volckaert G."/>
            <person name="Voss H."/>
            <person name="Wambutt R."/>
            <person name="Wedler H."/>
            <person name="Wiemann S."/>
            <person name="Winsor B."/>
            <person name="Wolfe K.H."/>
            <person name="Zollner A."/>
            <person name="Zumstein E."/>
            <person name="Kleine K."/>
        </authorList>
    </citation>
    <scope>NUCLEOTIDE SEQUENCE [LARGE SCALE GENOMIC DNA]</scope>
    <source>
        <strain>ATCC 204508 / S288c</strain>
    </source>
</reference>
<reference key="3">
    <citation type="journal article" date="2014" name="G3 (Bethesda)">
        <title>The reference genome sequence of Saccharomyces cerevisiae: Then and now.</title>
        <authorList>
            <person name="Engel S.R."/>
            <person name="Dietrich F.S."/>
            <person name="Fisk D.G."/>
            <person name="Binkley G."/>
            <person name="Balakrishnan R."/>
            <person name="Costanzo M.C."/>
            <person name="Dwight S.S."/>
            <person name="Hitz B.C."/>
            <person name="Karra K."/>
            <person name="Nash R.S."/>
            <person name="Weng S."/>
            <person name="Wong E.D."/>
            <person name="Lloyd P."/>
            <person name="Skrzypek M.S."/>
            <person name="Miyasato S.R."/>
            <person name="Simison M."/>
            <person name="Cherry J.M."/>
        </authorList>
    </citation>
    <scope>GENOME REANNOTATION</scope>
    <source>
        <strain>ATCC 204508 / S288c</strain>
    </source>
</reference>
<reference key="4">
    <citation type="journal article" date="2007" name="Genome Res.">
        <title>Approaching a complete repository of sequence-verified protein-encoding clones for Saccharomyces cerevisiae.</title>
        <authorList>
            <person name="Hu Y."/>
            <person name="Rolfs A."/>
            <person name="Bhullar B."/>
            <person name="Murthy T.V.S."/>
            <person name="Zhu C."/>
            <person name="Berger M.F."/>
            <person name="Camargo A.A."/>
            <person name="Kelley F."/>
            <person name="McCarron S."/>
            <person name="Jepson D."/>
            <person name="Richardson A."/>
            <person name="Raphael J."/>
            <person name="Moreira D."/>
            <person name="Taycher E."/>
            <person name="Zuo D."/>
            <person name="Mohr S."/>
            <person name="Kane M.F."/>
            <person name="Williamson J."/>
            <person name="Simpson A.J.G."/>
            <person name="Bulyk M.L."/>
            <person name="Harlow E."/>
            <person name="Marsischky G."/>
            <person name="Kolodner R.D."/>
            <person name="LaBaer J."/>
        </authorList>
    </citation>
    <scope>NUCLEOTIDE SEQUENCE [GENOMIC DNA]</scope>
    <source>
        <strain>ATCC 204508 / S288c</strain>
    </source>
</reference>
<reference key="5">
    <citation type="journal article" date="1999" name="Mol. Microbiol.">
        <title>Genetic redundancy and gene fusion in the genome of the Baker's yeast Saccharomyces cerevisiae: functional characterization of a three-member gene family involved in the thiamine biosynthetic pathway.</title>
        <authorList>
            <person name="Llorente B."/>
            <person name="Fairhead C."/>
            <person name="Dujon B."/>
        </authorList>
    </citation>
    <scope>FUNCTION AS A HMPP KINASE</scope>
    <scope>INDUCTION</scope>
</reference>
<reference key="6">
    <citation type="journal article" date="2003" name="Nature">
        <title>Global analysis of protein expression in yeast.</title>
        <authorList>
            <person name="Ghaemmaghami S."/>
            <person name="Huh W.-K."/>
            <person name="Bower K."/>
            <person name="Howson R.W."/>
            <person name="Belle A."/>
            <person name="Dephoure N."/>
            <person name="O'Shea E.K."/>
            <person name="Weissman J.S."/>
        </authorList>
    </citation>
    <scope>LEVEL OF PROTEIN EXPRESSION [LARGE SCALE ANALYSIS]</scope>
</reference>
<reference key="7">
    <citation type="journal article" date="2005" name="Bioorg. Chem.">
        <title>Thi20, a remarkable enzyme from Saccharomyces cerevisiae with dual thiamin biosynthetic and degradation activities.</title>
        <authorList>
            <person name="Haas A.L."/>
            <person name="Laun N.P."/>
            <person name="Begley T.P."/>
        </authorList>
    </citation>
    <scope>FUNCTION</scope>
    <scope>CATALYTIC ACTIVITY</scope>
</reference>
<reference evidence="8" key="8">
    <citation type="journal article" date="2011" name="Acta Crystallogr. D">
        <title>Structure of trifunctional THI20 from yeast.</title>
        <authorList>
            <person name="French J.B."/>
            <person name="Begley T.P."/>
            <person name="Ealick S.E."/>
        </authorList>
    </citation>
    <scope>X-RAY CRYSTALLOGRAPHY (2.68 ANGSTROMS) OF 2-551</scope>
</reference>
<comment type="function">
    <text evidence="3 5">Trifunctional protein with both thiamine biosynthetic and degradative activity (PubMed:15967475). Within the thiamine biosynthesis pathway, catalyzes the phosphorylation of hydroxymethylpyrimidine (HMP) to hydroxymethylpyrimidine phosphate (HMP-P), as well as of HMP-P to HMP-PP (PubMed:10383756, PubMed:15967475). Also has thiaminase II activity and degrades thiamine using water as the nucleophile, resulting only in the formation of HMP (4-amino-2-methyl-5-hydroxymethylpyrimidine) and Thz (4-methyl-5-thiazole ethanol) (PubMed:15967475).</text>
</comment>
<comment type="catalytic activity">
    <reaction evidence="5">
        <text>4-amino-5-hydroxymethyl-2-methylpyrimidine + ATP = 4-amino-2-methyl-5-(phosphooxymethyl)pyrimidine + ADP + H(+)</text>
        <dbReference type="Rhea" id="RHEA:23096"/>
        <dbReference type="ChEBI" id="CHEBI:15378"/>
        <dbReference type="ChEBI" id="CHEBI:16892"/>
        <dbReference type="ChEBI" id="CHEBI:30616"/>
        <dbReference type="ChEBI" id="CHEBI:58354"/>
        <dbReference type="ChEBI" id="CHEBI:456216"/>
        <dbReference type="EC" id="2.7.1.49"/>
    </reaction>
    <physiologicalReaction direction="left-to-right" evidence="5">
        <dbReference type="Rhea" id="RHEA:23097"/>
    </physiologicalReaction>
</comment>
<comment type="catalytic activity">
    <reaction evidence="5">
        <text>4-amino-2-methyl-5-(phosphooxymethyl)pyrimidine + ATP = 4-amino-2-methyl-5-(diphosphooxymethyl)pyrimidine + ADP</text>
        <dbReference type="Rhea" id="RHEA:19893"/>
        <dbReference type="ChEBI" id="CHEBI:30616"/>
        <dbReference type="ChEBI" id="CHEBI:57841"/>
        <dbReference type="ChEBI" id="CHEBI:58354"/>
        <dbReference type="ChEBI" id="CHEBI:456216"/>
        <dbReference type="EC" id="2.7.4.7"/>
    </reaction>
    <physiologicalReaction direction="left-to-right" evidence="5">
        <dbReference type="Rhea" id="RHEA:19894"/>
    </physiologicalReaction>
</comment>
<comment type="catalytic activity">
    <reaction evidence="5">
        <text>thiamine + H2O = 5-(2-hydroxyethyl)-4-methylthiazole + 4-amino-5-hydroxymethyl-2-methylpyrimidine + H(+)</text>
        <dbReference type="Rhea" id="RHEA:17509"/>
        <dbReference type="ChEBI" id="CHEBI:15377"/>
        <dbReference type="ChEBI" id="CHEBI:15378"/>
        <dbReference type="ChEBI" id="CHEBI:16892"/>
        <dbReference type="ChEBI" id="CHEBI:17957"/>
        <dbReference type="ChEBI" id="CHEBI:18385"/>
        <dbReference type="EC" id="3.5.99.2"/>
    </reaction>
    <physiologicalReaction direction="left-to-right" evidence="5">
        <dbReference type="Rhea" id="RHEA:17510"/>
    </physiologicalReaction>
</comment>
<comment type="pathway">
    <text evidence="5">Cofactor biosynthesis; thiamine diphosphate biosynthesis; 4-amino-2-methyl-5-diphosphomethylpyrimidine from 5-amino-1-(5-phospho-D-ribosyl)imidazole: step 2/3.</text>
</comment>
<comment type="pathway">
    <text evidence="5">Cofactor biosynthesis; thiamine diphosphate biosynthesis; 4-amino-2-methyl-5-diphosphomethylpyrimidine from 5-amino-1-(5-phospho-D-ribosyl)imidazole: step 3/3.</text>
</comment>
<comment type="induction">
    <text evidence="3">By absence of thiamine.</text>
</comment>
<comment type="miscellaneous">
    <text evidence="4">Present with 195 molecules/cell in log phase SD medium.</text>
</comment>
<comment type="similarity">
    <text evidence="7">In the N-terminal section; belongs to the ThiD family.</text>
</comment>
<comment type="similarity">
    <text evidence="7">In the C-terminal section; belongs to the thiaminase-2 family.</text>
</comment>
<comment type="sequence caution" evidence="7">
    <conflict type="frameshift">
        <sequence resource="EMBL-CDS" id="CAA62531"/>
    </conflict>
</comment>
<dbReference type="EC" id="2.7.1.49" evidence="5"/>
<dbReference type="EC" id="2.7.4.7" evidence="5"/>
<dbReference type="EC" id="3.5.99.2" evidence="5"/>
<dbReference type="EMBL" id="X91067">
    <property type="protein sequence ID" value="CAA62531.1"/>
    <property type="status" value="ALT_FRAME"/>
    <property type="molecule type" value="Genomic_DNA"/>
</dbReference>
<dbReference type="EMBL" id="Z74797">
    <property type="protein sequence ID" value="CAA99063.1"/>
    <property type="molecule type" value="Genomic_DNA"/>
</dbReference>
<dbReference type="EMBL" id="AY692780">
    <property type="protein sequence ID" value="AAT92799.1"/>
    <property type="molecule type" value="Genomic_DNA"/>
</dbReference>
<dbReference type="EMBL" id="BK006948">
    <property type="protein sequence ID" value="DAA10728.1"/>
    <property type="molecule type" value="Genomic_DNA"/>
</dbReference>
<dbReference type="PIR" id="S66740">
    <property type="entry name" value="S66740"/>
</dbReference>
<dbReference type="RefSeq" id="NP_014586.1">
    <property type="nucleotide sequence ID" value="NM_001183310.1"/>
</dbReference>
<dbReference type="PDB" id="3RM5">
    <property type="method" value="X-ray"/>
    <property type="resolution" value="2.68 A"/>
    <property type="chains" value="A/B=2-551"/>
</dbReference>
<dbReference type="PDBsum" id="3RM5"/>
<dbReference type="SMR" id="Q08224"/>
<dbReference type="BioGRID" id="34346">
    <property type="interactions" value="87"/>
</dbReference>
<dbReference type="DIP" id="DIP-8852N"/>
<dbReference type="FunCoup" id="Q08224">
    <property type="interactions" value="913"/>
</dbReference>
<dbReference type="IntAct" id="Q08224">
    <property type="interactions" value="95"/>
</dbReference>
<dbReference type="STRING" id="4932.YOL055C"/>
<dbReference type="PaxDb" id="4932-YOL055C"/>
<dbReference type="PeptideAtlas" id="Q08224"/>
<dbReference type="EnsemblFungi" id="YOL055C_mRNA">
    <property type="protein sequence ID" value="YOL055C"/>
    <property type="gene ID" value="YOL055C"/>
</dbReference>
<dbReference type="GeneID" id="854099"/>
<dbReference type="KEGG" id="sce:YOL055C"/>
<dbReference type="AGR" id="SGD:S000005416"/>
<dbReference type="SGD" id="S000005416">
    <property type="gene designation" value="THI20"/>
</dbReference>
<dbReference type="VEuPathDB" id="FungiDB:YOL055C"/>
<dbReference type="eggNOG" id="KOG2598">
    <property type="taxonomic scope" value="Eukaryota"/>
</dbReference>
<dbReference type="GeneTree" id="ENSGT00940000176386"/>
<dbReference type="HOGENOM" id="CLU_020520_2_1_1"/>
<dbReference type="InParanoid" id="Q08224"/>
<dbReference type="OMA" id="FWEMFPY"/>
<dbReference type="OrthoDB" id="10028886at2759"/>
<dbReference type="BioCyc" id="MetaCyc:MONOMER3O-77"/>
<dbReference type="BioCyc" id="YEAST:MONOMER3O-77"/>
<dbReference type="BRENDA" id="2.7.1.49">
    <property type="organism ID" value="984"/>
</dbReference>
<dbReference type="BRENDA" id="2.7.4.7">
    <property type="organism ID" value="984"/>
</dbReference>
<dbReference type="BRENDA" id="3.5.99.2">
    <property type="organism ID" value="984"/>
</dbReference>
<dbReference type="UniPathway" id="UPA00060">
    <property type="reaction ID" value="UER00137"/>
</dbReference>
<dbReference type="UniPathway" id="UPA00060">
    <property type="reaction ID" value="UER00138"/>
</dbReference>
<dbReference type="BioGRID-ORCS" id="854099">
    <property type="hits" value="0 hits in 10 CRISPR screens"/>
</dbReference>
<dbReference type="EvolutionaryTrace" id="Q08224"/>
<dbReference type="PRO" id="PR:Q08224"/>
<dbReference type="Proteomes" id="UP000002311">
    <property type="component" value="Chromosome XV"/>
</dbReference>
<dbReference type="RNAct" id="Q08224">
    <property type="molecule type" value="protein"/>
</dbReference>
<dbReference type="GO" id="GO:0005829">
    <property type="term" value="C:cytosol"/>
    <property type="evidence" value="ECO:0000314"/>
    <property type="project" value="SGD"/>
</dbReference>
<dbReference type="GO" id="GO:0005524">
    <property type="term" value="F:ATP binding"/>
    <property type="evidence" value="ECO:0007669"/>
    <property type="project" value="UniProtKB-KW"/>
</dbReference>
<dbReference type="GO" id="GO:0008902">
    <property type="term" value="F:hydroxymethylpyrimidine kinase activity"/>
    <property type="evidence" value="ECO:0000314"/>
    <property type="project" value="SGD"/>
</dbReference>
<dbReference type="GO" id="GO:0008972">
    <property type="term" value="F:phosphomethylpyrimidine kinase activity"/>
    <property type="evidence" value="ECO:0000314"/>
    <property type="project" value="SGD"/>
</dbReference>
<dbReference type="GO" id="GO:0050334">
    <property type="term" value="F:thiaminase activity"/>
    <property type="evidence" value="ECO:0000314"/>
    <property type="project" value="SGD"/>
</dbReference>
<dbReference type="GO" id="GO:0009228">
    <property type="term" value="P:thiamine biosynthetic process"/>
    <property type="evidence" value="ECO:0000315"/>
    <property type="project" value="SGD"/>
</dbReference>
<dbReference type="GO" id="GO:0009230">
    <property type="term" value="P:thiamine catabolic process"/>
    <property type="evidence" value="ECO:0000314"/>
    <property type="project" value="SGD"/>
</dbReference>
<dbReference type="GO" id="GO:0009229">
    <property type="term" value="P:thiamine diphosphate biosynthetic process"/>
    <property type="evidence" value="ECO:0007669"/>
    <property type="project" value="UniProtKB-UniPathway"/>
</dbReference>
<dbReference type="CDD" id="cd01169">
    <property type="entry name" value="HMPP_kinase"/>
    <property type="match status" value="1"/>
</dbReference>
<dbReference type="CDD" id="cd19367">
    <property type="entry name" value="TenA_C_ScTHI20-like"/>
    <property type="match status" value="1"/>
</dbReference>
<dbReference type="FunFam" id="1.20.910.10:FF:000003">
    <property type="entry name" value="Hydroxymethylpyrimidine/phosphomethylpyrimidine kinase THI20"/>
    <property type="match status" value="1"/>
</dbReference>
<dbReference type="FunFam" id="3.40.1190.20:FF:000038">
    <property type="entry name" value="Hydroxymethylpyrimidine/phosphomethylpyrimidine kinase THI20"/>
    <property type="match status" value="1"/>
</dbReference>
<dbReference type="Gene3D" id="3.40.1190.20">
    <property type="match status" value="1"/>
</dbReference>
<dbReference type="Gene3D" id="1.20.910.10">
    <property type="entry name" value="Heme oxygenase-like"/>
    <property type="match status" value="1"/>
</dbReference>
<dbReference type="InterPro" id="IPR016084">
    <property type="entry name" value="Haem_Oase-like_multi-hlx"/>
</dbReference>
<dbReference type="InterPro" id="IPR004399">
    <property type="entry name" value="HMP/HMP-P_kinase_dom"/>
</dbReference>
<dbReference type="InterPro" id="IPR013749">
    <property type="entry name" value="PM/HMP-P_kinase-1"/>
</dbReference>
<dbReference type="InterPro" id="IPR029056">
    <property type="entry name" value="Ribokinase-like"/>
</dbReference>
<dbReference type="InterPro" id="IPR004305">
    <property type="entry name" value="Thiaminase-2/PQQC"/>
</dbReference>
<dbReference type="InterPro" id="IPR027574">
    <property type="entry name" value="Thiaminase_II"/>
</dbReference>
<dbReference type="NCBIfam" id="TIGR00097">
    <property type="entry name" value="HMP-P_kinase"/>
    <property type="match status" value="1"/>
</dbReference>
<dbReference type="NCBIfam" id="TIGR04306">
    <property type="entry name" value="salvage_TenA"/>
    <property type="match status" value="1"/>
</dbReference>
<dbReference type="PANTHER" id="PTHR20858:SF17">
    <property type="entry name" value="HYDROXYMETHYLPYRIMIDINE_PHOSPHOMETHYLPYRIMIDINE KINASE THI20-RELATED"/>
    <property type="match status" value="1"/>
</dbReference>
<dbReference type="PANTHER" id="PTHR20858">
    <property type="entry name" value="PHOSPHOMETHYLPYRIMIDINE KINASE"/>
    <property type="match status" value="1"/>
</dbReference>
<dbReference type="Pfam" id="PF08543">
    <property type="entry name" value="Phos_pyr_kin"/>
    <property type="match status" value="1"/>
</dbReference>
<dbReference type="Pfam" id="PF03070">
    <property type="entry name" value="TENA_THI-4"/>
    <property type="match status" value="1"/>
</dbReference>
<dbReference type="SUPFAM" id="SSF48613">
    <property type="entry name" value="Heme oxygenase-like"/>
    <property type="match status" value="1"/>
</dbReference>
<dbReference type="SUPFAM" id="SSF53613">
    <property type="entry name" value="Ribokinase-like"/>
    <property type="match status" value="1"/>
</dbReference>
<protein>
    <recommendedName>
        <fullName evidence="6">Hydroxymethylpyrimidine/phosphomethylpyrimidine kinase THI20</fullName>
        <ecNumber evidence="5">2.7.1.49</ecNumber>
        <ecNumber evidence="5">2.7.4.7</ecNumber>
        <ecNumber evidence="5">3.5.99.2</ecNumber>
    </recommendedName>
    <alternativeName>
        <fullName evidence="6">Hydroxymethylpyrimidine kinase</fullName>
        <shortName evidence="6">HMP kinase</shortName>
    </alternativeName>
    <alternativeName>
        <fullName evidence="6">Hydroxymethylpyrimidine phosphate kinase</fullName>
        <shortName evidence="6">HMP-P kinase</shortName>
        <shortName evidence="6">HMP-phosphate kinase</shortName>
        <shortName evidence="6">HMPP kinase</shortName>
    </alternativeName>
</protein>
<sequence>MTYSTVSINTPPPYLTLACNEKLPTVLSIAGTDPSGGAGIEADVKTITAHRCYAMTCITALNAQTPVKVYSINNTPKEVVFQTLESNLKDMKCNVIKTGMLTAAAIEVLHEKLLQLGENRPKLVVDPVLVATSGSSLAGKDIVSLITEKVAPFADILTPNIPECYKLLGEERKVNGLQDIFQIAKDLAKITKCSNILVKGGHIPWNDEKEKYITDVLFLGAEQKFIIFKGNFVNTTHTHGTGCTLASAIASNLARGYSLPQSVYGGIEYVQNAVAIGCDVTKETVKDNGPINHVYAVEIPLEKMLSDECFTASDVIPKKPLKSAADKIPGGNFYEYLINHPKVKPHWDSYINHEFVKKVADGTLERKKFQFFIEQDYAYLVDYARVHCIAGSKAPCLEDMEKELVIVGGVRTEMGQHEKRLKEVFGVKDPDYFQKIKRGPALRAYSRYFNDVSRRGNWQELVASLTPCLMGYGEALTKMKGKVTAPEGSVYHEWCETYASSWYREAMDEGEKLLNHILETYPPEQLDTLVTIYAEVCELETNFWTAALEYE</sequence>